<dbReference type="EC" id="7.4.2.8" evidence="1"/>
<dbReference type="EMBL" id="CP000868">
    <property type="protein sequence ID" value="ABX16511.1"/>
    <property type="molecule type" value="Genomic_DNA"/>
</dbReference>
<dbReference type="EMBL" id="AP009385">
    <property type="protein sequence ID" value="BAG42379.1"/>
    <property type="molecule type" value="Genomic_DNA"/>
</dbReference>
<dbReference type="RefSeq" id="WP_012214182.1">
    <property type="nucleotide sequence ID" value="NC_010084.1"/>
</dbReference>
<dbReference type="SMR" id="A9AI87"/>
<dbReference type="STRING" id="395019.BMULJ_00411"/>
<dbReference type="KEGG" id="bmj:BMULJ_00411"/>
<dbReference type="KEGG" id="bmu:Bmul_2827"/>
<dbReference type="eggNOG" id="COG0653">
    <property type="taxonomic scope" value="Bacteria"/>
</dbReference>
<dbReference type="HOGENOM" id="CLU_005314_3_0_4"/>
<dbReference type="Proteomes" id="UP000008815">
    <property type="component" value="Chromosome 1"/>
</dbReference>
<dbReference type="GO" id="GO:0031522">
    <property type="term" value="C:cell envelope Sec protein transport complex"/>
    <property type="evidence" value="ECO:0007669"/>
    <property type="project" value="TreeGrafter"/>
</dbReference>
<dbReference type="GO" id="GO:0005829">
    <property type="term" value="C:cytosol"/>
    <property type="evidence" value="ECO:0007669"/>
    <property type="project" value="TreeGrafter"/>
</dbReference>
<dbReference type="GO" id="GO:0005886">
    <property type="term" value="C:plasma membrane"/>
    <property type="evidence" value="ECO:0007669"/>
    <property type="project" value="UniProtKB-SubCell"/>
</dbReference>
<dbReference type="GO" id="GO:0005524">
    <property type="term" value="F:ATP binding"/>
    <property type="evidence" value="ECO:0007669"/>
    <property type="project" value="UniProtKB-UniRule"/>
</dbReference>
<dbReference type="GO" id="GO:0046872">
    <property type="term" value="F:metal ion binding"/>
    <property type="evidence" value="ECO:0007669"/>
    <property type="project" value="UniProtKB-KW"/>
</dbReference>
<dbReference type="GO" id="GO:0008564">
    <property type="term" value="F:protein-exporting ATPase activity"/>
    <property type="evidence" value="ECO:0007669"/>
    <property type="project" value="UniProtKB-EC"/>
</dbReference>
<dbReference type="GO" id="GO:0065002">
    <property type="term" value="P:intracellular protein transmembrane transport"/>
    <property type="evidence" value="ECO:0007669"/>
    <property type="project" value="UniProtKB-UniRule"/>
</dbReference>
<dbReference type="GO" id="GO:0017038">
    <property type="term" value="P:protein import"/>
    <property type="evidence" value="ECO:0007669"/>
    <property type="project" value="InterPro"/>
</dbReference>
<dbReference type="GO" id="GO:0006605">
    <property type="term" value="P:protein targeting"/>
    <property type="evidence" value="ECO:0007669"/>
    <property type="project" value="UniProtKB-UniRule"/>
</dbReference>
<dbReference type="GO" id="GO:0043952">
    <property type="term" value="P:protein transport by the Sec complex"/>
    <property type="evidence" value="ECO:0007669"/>
    <property type="project" value="TreeGrafter"/>
</dbReference>
<dbReference type="CDD" id="cd17928">
    <property type="entry name" value="DEXDc_SecA"/>
    <property type="match status" value="1"/>
</dbReference>
<dbReference type="CDD" id="cd18803">
    <property type="entry name" value="SF2_C_secA"/>
    <property type="match status" value="1"/>
</dbReference>
<dbReference type="FunFam" id="3.40.50.300:FF:000081">
    <property type="entry name" value="Preprotein translocase subunit SecA"/>
    <property type="match status" value="1"/>
</dbReference>
<dbReference type="FunFam" id="3.40.50.300:FF:000113">
    <property type="entry name" value="Preprotein translocase subunit SecA"/>
    <property type="match status" value="1"/>
</dbReference>
<dbReference type="FunFam" id="3.90.1440.10:FF:000001">
    <property type="entry name" value="Preprotein translocase subunit SecA"/>
    <property type="match status" value="1"/>
</dbReference>
<dbReference type="FunFam" id="1.10.3060.10:FF:000003">
    <property type="entry name" value="Protein translocase subunit SecA"/>
    <property type="match status" value="1"/>
</dbReference>
<dbReference type="Gene3D" id="1.10.3060.10">
    <property type="entry name" value="Helical scaffold and wing domains of SecA"/>
    <property type="match status" value="1"/>
</dbReference>
<dbReference type="Gene3D" id="3.40.50.300">
    <property type="entry name" value="P-loop containing nucleotide triphosphate hydrolases"/>
    <property type="match status" value="2"/>
</dbReference>
<dbReference type="Gene3D" id="3.90.1440.10">
    <property type="entry name" value="SecA, preprotein cross-linking domain"/>
    <property type="match status" value="1"/>
</dbReference>
<dbReference type="HAMAP" id="MF_01382">
    <property type="entry name" value="SecA"/>
    <property type="match status" value="1"/>
</dbReference>
<dbReference type="InterPro" id="IPR014001">
    <property type="entry name" value="Helicase_ATP-bd"/>
</dbReference>
<dbReference type="InterPro" id="IPR001650">
    <property type="entry name" value="Helicase_C-like"/>
</dbReference>
<dbReference type="InterPro" id="IPR027417">
    <property type="entry name" value="P-loop_NTPase"/>
</dbReference>
<dbReference type="InterPro" id="IPR004027">
    <property type="entry name" value="SEC_C_motif"/>
</dbReference>
<dbReference type="InterPro" id="IPR000185">
    <property type="entry name" value="SecA"/>
</dbReference>
<dbReference type="InterPro" id="IPR020937">
    <property type="entry name" value="SecA_CS"/>
</dbReference>
<dbReference type="InterPro" id="IPR011115">
    <property type="entry name" value="SecA_DEAD"/>
</dbReference>
<dbReference type="InterPro" id="IPR014018">
    <property type="entry name" value="SecA_motor_DEAD"/>
</dbReference>
<dbReference type="InterPro" id="IPR011130">
    <property type="entry name" value="SecA_preprotein_X-link_dom"/>
</dbReference>
<dbReference type="InterPro" id="IPR044722">
    <property type="entry name" value="SecA_SF2_C"/>
</dbReference>
<dbReference type="InterPro" id="IPR011116">
    <property type="entry name" value="SecA_Wing/Scaffold"/>
</dbReference>
<dbReference type="InterPro" id="IPR036266">
    <property type="entry name" value="SecA_Wing/Scaffold_sf"/>
</dbReference>
<dbReference type="InterPro" id="IPR036670">
    <property type="entry name" value="SecA_X-link_sf"/>
</dbReference>
<dbReference type="NCBIfam" id="NF009538">
    <property type="entry name" value="PRK12904.1"/>
    <property type="match status" value="1"/>
</dbReference>
<dbReference type="NCBIfam" id="TIGR00963">
    <property type="entry name" value="secA"/>
    <property type="match status" value="1"/>
</dbReference>
<dbReference type="PANTHER" id="PTHR30612:SF0">
    <property type="entry name" value="CHLOROPLAST PROTEIN-TRANSPORTING ATPASE"/>
    <property type="match status" value="1"/>
</dbReference>
<dbReference type="PANTHER" id="PTHR30612">
    <property type="entry name" value="SECA INNER MEMBRANE COMPONENT OF SEC PROTEIN SECRETION SYSTEM"/>
    <property type="match status" value="1"/>
</dbReference>
<dbReference type="Pfam" id="PF21090">
    <property type="entry name" value="P-loop_SecA"/>
    <property type="match status" value="1"/>
</dbReference>
<dbReference type="Pfam" id="PF02810">
    <property type="entry name" value="SEC-C"/>
    <property type="match status" value="1"/>
</dbReference>
<dbReference type="Pfam" id="PF07517">
    <property type="entry name" value="SecA_DEAD"/>
    <property type="match status" value="1"/>
</dbReference>
<dbReference type="Pfam" id="PF01043">
    <property type="entry name" value="SecA_PP_bind"/>
    <property type="match status" value="1"/>
</dbReference>
<dbReference type="Pfam" id="PF07516">
    <property type="entry name" value="SecA_SW"/>
    <property type="match status" value="1"/>
</dbReference>
<dbReference type="PRINTS" id="PR00906">
    <property type="entry name" value="SECA"/>
</dbReference>
<dbReference type="SMART" id="SM00957">
    <property type="entry name" value="SecA_DEAD"/>
    <property type="match status" value="1"/>
</dbReference>
<dbReference type="SMART" id="SM00958">
    <property type="entry name" value="SecA_PP_bind"/>
    <property type="match status" value="1"/>
</dbReference>
<dbReference type="SUPFAM" id="SSF81886">
    <property type="entry name" value="Helical scaffold and wing domains of SecA"/>
    <property type="match status" value="1"/>
</dbReference>
<dbReference type="SUPFAM" id="SSF52540">
    <property type="entry name" value="P-loop containing nucleoside triphosphate hydrolases"/>
    <property type="match status" value="2"/>
</dbReference>
<dbReference type="SUPFAM" id="SSF81767">
    <property type="entry name" value="Pre-protein crosslinking domain of SecA"/>
    <property type="match status" value="1"/>
</dbReference>
<dbReference type="PROSITE" id="PS01312">
    <property type="entry name" value="SECA"/>
    <property type="match status" value="1"/>
</dbReference>
<dbReference type="PROSITE" id="PS51196">
    <property type="entry name" value="SECA_MOTOR_DEAD"/>
    <property type="match status" value="1"/>
</dbReference>
<name>SECA_BURM1</name>
<reference key="1">
    <citation type="submission" date="2007-10" db="EMBL/GenBank/DDBJ databases">
        <title>Complete sequence of chromosome 1 of Burkholderia multivorans ATCC 17616.</title>
        <authorList>
            <person name="Copeland A."/>
            <person name="Lucas S."/>
            <person name="Lapidus A."/>
            <person name="Barry K."/>
            <person name="Glavina del Rio T."/>
            <person name="Dalin E."/>
            <person name="Tice H."/>
            <person name="Pitluck S."/>
            <person name="Chain P."/>
            <person name="Malfatti S."/>
            <person name="Shin M."/>
            <person name="Vergez L."/>
            <person name="Schmutz J."/>
            <person name="Larimer F."/>
            <person name="Land M."/>
            <person name="Hauser L."/>
            <person name="Kyrpides N."/>
            <person name="Kim E."/>
            <person name="Tiedje J."/>
            <person name="Richardson P."/>
        </authorList>
    </citation>
    <scope>NUCLEOTIDE SEQUENCE [LARGE SCALE GENOMIC DNA]</scope>
    <source>
        <strain>ATCC 17616 / 249</strain>
    </source>
</reference>
<reference key="2">
    <citation type="submission" date="2007-04" db="EMBL/GenBank/DDBJ databases">
        <title>Complete genome sequence of Burkholderia multivorans ATCC 17616.</title>
        <authorList>
            <person name="Ohtsubo Y."/>
            <person name="Yamashita A."/>
            <person name="Kurokawa K."/>
            <person name="Takami H."/>
            <person name="Yuhara S."/>
            <person name="Nishiyama E."/>
            <person name="Endo R."/>
            <person name="Miyazaki R."/>
            <person name="Ono A."/>
            <person name="Yano K."/>
            <person name="Ito M."/>
            <person name="Sota M."/>
            <person name="Yuji N."/>
            <person name="Hattori M."/>
            <person name="Tsuda M."/>
        </authorList>
    </citation>
    <scope>NUCLEOTIDE SEQUENCE [LARGE SCALE GENOMIC DNA]</scope>
    <source>
        <strain>ATCC 17616 / 249</strain>
    </source>
</reference>
<evidence type="ECO:0000255" key="1">
    <source>
        <dbReference type="HAMAP-Rule" id="MF_01382"/>
    </source>
</evidence>
<accession>A9AI87</accession>
<sequence length="932" mass="104519">MTTGFLQKIFGSRNQRLVKQYQKTVAAINALETQIEKLTDDQLRGKTDEFRQRVAAGESLDKLLPEAFAVCREASRRVLKMRHFDVQLIGGMVLHYGKIAEMRTGEGKTLVATLPVYLNALSGRGVHVVTVNDYLAQRDAEWMARLYNFLGLSVGINLSGMEHDQKQQAYAADITYGTNNEFGFDYLRDNMVYETGARVQRALNFAVVDEVDSILIDEARTPLIISGQAEDHTELYVRMNALPPLLERQIGEEKADGTGVEKPGDYTLDEKSRQVFLTESGHEKAERLLAEWGLIGEGESLYAPQNITLMHHVYAALRAHTLFHKDQHYVVQNGEVVIVDEFTGRLMAGRRWSDGLHQAVEAKEHVKIQSENQTLASITFQNYFRMYAKLAGMTGTADTEAYEFNEIYGLETVVIPTNRPPKRIDKQDQIYKTAKERYDAVIRDIRDCYERGQPVLVGTTSIENSELLSHLLKQAGLPHEVLNAKQHEREAAIVAEAGRPRAITIATNMAGRGTDIVLGGNVEKQAAFIEADESIPADEKARRIQQLHDEWESLHEQVKAAGGLHIIGTERHESRRIDNQLRGRAGRQGDPGSSRFYLSLDDPLLRIFAGDRVRAIMDRLKMPEGEAIEAGIVTRSIESAQRKVEARNFDIRKQLLEYDDVANDQRKVIYQQRNELLEAHDITETITAMRHSVIADVVRQFVPEGSIEEQWDVPELEEALRNDWQLDLAIQEMVNESSSITADEILDAVTTAADEQYEAKVALVGRESFSAFERSVMLQTVDRLWREHLAALDHLRQGIHLRGYAQKNPKQEYKREAFELFAAMLEAIKQEVTRIVMNVQIQSPEQLEEAAEQIEERSSHLENVEYQHAEFAEAGAPAAGGAAVAAATATADMVGSAMAHSGPGGEMPKVGRNDPCPCGSGKKYKHCHGKLS</sequence>
<gene>
    <name evidence="1" type="primary">secA</name>
    <name type="ordered locus">Bmul_2827</name>
    <name type="ordered locus">BMULJ_00411</name>
</gene>
<protein>
    <recommendedName>
        <fullName evidence="1">Protein translocase subunit SecA</fullName>
        <ecNumber evidence="1">7.4.2.8</ecNumber>
    </recommendedName>
</protein>
<keyword id="KW-0067">ATP-binding</keyword>
<keyword id="KW-0997">Cell inner membrane</keyword>
<keyword id="KW-1003">Cell membrane</keyword>
<keyword id="KW-0963">Cytoplasm</keyword>
<keyword id="KW-0472">Membrane</keyword>
<keyword id="KW-0479">Metal-binding</keyword>
<keyword id="KW-0547">Nucleotide-binding</keyword>
<keyword id="KW-0653">Protein transport</keyword>
<keyword id="KW-1185">Reference proteome</keyword>
<keyword id="KW-1278">Translocase</keyword>
<keyword id="KW-0811">Translocation</keyword>
<keyword id="KW-0813">Transport</keyword>
<keyword id="KW-0862">Zinc</keyword>
<feature type="chain" id="PRO_1000144984" description="Protein translocase subunit SecA">
    <location>
        <begin position="1"/>
        <end position="932"/>
    </location>
</feature>
<feature type="binding site" evidence="1">
    <location>
        <position position="87"/>
    </location>
    <ligand>
        <name>ATP</name>
        <dbReference type="ChEBI" id="CHEBI:30616"/>
    </ligand>
</feature>
<feature type="binding site" evidence="1">
    <location>
        <begin position="105"/>
        <end position="109"/>
    </location>
    <ligand>
        <name>ATP</name>
        <dbReference type="ChEBI" id="CHEBI:30616"/>
    </ligand>
</feature>
<feature type="binding site" evidence="1">
    <location>
        <position position="515"/>
    </location>
    <ligand>
        <name>ATP</name>
        <dbReference type="ChEBI" id="CHEBI:30616"/>
    </ligand>
</feature>
<feature type="binding site" evidence="1">
    <location>
        <position position="916"/>
    </location>
    <ligand>
        <name>Zn(2+)</name>
        <dbReference type="ChEBI" id="CHEBI:29105"/>
    </ligand>
</feature>
<feature type="binding site" evidence="1">
    <location>
        <position position="918"/>
    </location>
    <ligand>
        <name>Zn(2+)</name>
        <dbReference type="ChEBI" id="CHEBI:29105"/>
    </ligand>
</feature>
<feature type="binding site" evidence="1">
    <location>
        <position position="927"/>
    </location>
    <ligand>
        <name>Zn(2+)</name>
        <dbReference type="ChEBI" id="CHEBI:29105"/>
    </ligand>
</feature>
<feature type="binding site" evidence="1">
    <location>
        <position position="928"/>
    </location>
    <ligand>
        <name>Zn(2+)</name>
        <dbReference type="ChEBI" id="CHEBI:29105"/>
    </ligand>
</feature>
<proteinExistence type="inferred from homology"/>
<comment type="function">
    <text evidence="1">Part of the Sec protein translocase complex. Interacts with the SecYEG preprotein conducting channel. Has a central role in coupling the hydrolysis of ATP to the transfer of proteins into and across the cell membrane, serving both as a receptor for the preprotein-SecB complex and as an ATP-driven molecular motor driving the stepwise translocation of polypeptide chains across the membrane.</text>
</comment>
<comment type="catalytic activity">
    <reaction evidence="1">
        <text>ATP + H2O + cellular proteinSide 1 = ADP + phosphate + cellular proteinSide 2.</text>
        <dbReference type="EC" id="7.4.2.8"/>
    </reaction>
</comment>
<comment type="cofactor">
    <cofactor evidence="1">
        <name>Zn(2+)</name>
        <dbReference type="ChEBI" id="CHEBI:29105"/>
    </cofactor>
    <text evidence="1">May bind 1 zinc ion per subunit.</text>
</comment>
<comment type="subunit">
    <text evidence="1">Monomer and homodimer. Part of the essential Sec protein translocation apparatus which comprises SecA, SecYEG and auxiliary proteins SecDF-YajC and YidC.</text>
</comment>
<comment type="subcellular location">
    <subcellularLocation>
        <location evidence="1">Cell inner membrane</location>
        <topology evidence="1">Peripheral membrane protein</topology>
        <orientation evidence="1">Cytoplasmic side</orientation>
    </subcellularLocation>
    <subcellularLocation>
        <location evidence="1">Cytoplasm</location>
    </subcellularLocation>
    <text evidence="1">Distribution is 50-50.</text>
</comment>
<comment type="similarity">
    <text evidence="1">Belongs to the SecA family.</text>
</comment>
<organism>
    <name type="scientific">Burkholderia multivorans (strain ATCC 17616 / 249)</name>
    <dbReference type="NCBI Taxonomy" id="395019"/>
    <lineage>
        <taxon>Bacteria</taxon>
        <taxon>Pseudomonadati</taxon>
        <taxon>Pseudomonadota</taxon>
        <taxon>Betaproteobacteria</taxon>
        <taxon>Burkholderiales</taxon>
        <taxon>Burkholderiaceae</taxon>
        <taxon>Burkholderia</taxon>
        <taxon>Burkholderia cepacia complex</taxon>
    </lineage>
</organism>